<dbReference type="EC" id="6.3.3.1" evidence="1"/>
<dbReference type="EMBL" id="AE014299">
    <property type="protein sequence ID" value="AAN55786.2"/>
    <property type="molecule type" value="Genomic_DNA"/>
</dbReference>
<dbReference type="RefSeq" id="NP_718342.2">
    <property type="nucleotide sequence ID" value="NC_004347.2"/>
</dbReference>
<dbReference type="RefSeq" id="WP_011072699.1">
    <property type="nucleotide sequence ID" value="NC_004347.2"/>
</dbReference>
<dbReference type="SMR" id="Q8EDI8"/>
<dbReference type="STRING" id="211586.SO_2760"/>
<dbReference type="PaxDb" id="211586-SO_2760"/>
<dbReference type="KEGG" id="son:SO_2760"/>
<dbReference type="PATRIC" id="fig|211586.12.peg.2660"/>
<dbReference type="eggNOG" id="COG0150">
    <property type="taxonomic scope" value="Bacteria"/>
</dbReference>
<dbReference type="HOGENOM" id="CLU_047116_0_0_6"/>
<dbReference type="OrthoDB" id="9777881at2"/>
<dbReference type="PhylomeDB" id="Q8EDI8"/>
<dbReference type="BioCyc" id="SONE211586:G1GMP-2547-MONOMER"/>
<dbReference type="UniPathway" id="UPA00074">
    <property type="reaction ID" value="UER00129"/>
</dbReference>
<dbReference type="Proteomes" id="UP000008186">
    <property type="component" value="Chromosome"/>
</dbReference>
<dbReference type="GO" id="GO:0005829">
    <property type="term" value="C:cytosol"/>
    <property type="evidence" value="ECO:0000318"/>
    <property type="project" value="GO_Central"/>
</dbReference>
<dbReference type="GO" id="GO:0005524">
    <property type="term" value="F:ATP binding"/>
    <property type="evidence" value="ECO:0007669"/>
    <property type="project" value="UniProtKB-KW"/>
</dbReference>
<dbReference type="GO" id="GO:0004637">
    <property type="term" value="F:phosphoribosylamine-glycine ligase activity"/>
    <property type="evidence" value="ECO:0000318"/>
    <property type="project" value="GO_Central"/>
</dbReference>
<dbReference type="GO" id="GO:0004641">
    <property type="term" value="F:phosphoribosylformylglycinamidine cyclo-ligase activity"/>
    <property type="evidence" value="ECO:0000318"/>
    <property type="project" value="GO_Central"/>
</dbReference>
<dbReference type="GO" id="GO:0006189">
    <property type="term" value="P:'de novo' IMP biosynthetic process"/>
    <property type="evidence" value="ECO:0007669"/>
    <property type="project" value="UniProtKB-UniRule"/>
</dbReference>
<dbReference type="GO" id="GO:0046084">
    <property type="term" value="P:adenine biosynthetic process"/>
    <property type="evidence" value="ECO:0000318"/>
    <property type="project" value="GO_Central"/>
</dbReference>
<dbReference type="GO" id="GO:0006164">
    <property type="term" value="P:purine nucleotide biosynthetic process"/>
    <property type="evidence" value="ECO:0000318"/>
    <property type="project" value="GO_Central"/>
</dbReference>
<dbReference type="CDD" id="cd02196">
    <property type="entry name" value="PurM"/>
    <property type="match status" value="1"/>
</dbReference>
<dbReference type="FunFam" id="3.30.1330.10:FF:000001">
    <property type="entry name" value="Phosphoribosylformylglycinamidine cyclo-ligase"/>
    <property type="match status" value="1"/>
</dbReference>
<dbReference type="FunFam" id="3.90.650.10:FF:000001">
    <property type="entry name" value="Phosphoribosylformylglycinamidine cyclo-ligase"/>
    <property type="match status" value="1"/>
</dbReference>
<dbReference type="Gene3D" id="3.90.650.10">
    <property type="entry name" value="PurM-like C-terminal domain"/>
    <property type="match status" value="1"/>
</dbReference>
<dbReference type="Gene3D" id="3.30.1330.10">
    <property type="entry name" value="PurM-like, N-terminal domain"/>
    <property type="match status" value="1"/>
</dbReference>
<dbReference type="HAMAP" id="MF_00741">
    <property type="entry name" value="AIRS"/>
    <property type="match status" value="1"/>
</dbReference>
<dbReference type="InterPro" id="IPR010918">
    <property type="entry name" value="PurM-like_C_dom"/>
</dbReference>
<dbReference type="InterPro" id="IPR036676">
    <property type="entry name" value="PurM-like_C_sf"/>
</dbReference>
<dbReference type="InterPro" id="IPR016188">
    <property type="entry name" value="PurM-like_N"/>
</dbReference>
<dbReference type="InterPro" id="IPR036921">
    <property type="entry name" value="PurM-like_N_sf"/>
</dbReference>
<dbReference type="InterPro" id="IPR004733">
    <property type="entry name" value="PurM_cligase"/>
</dbReference>
<dbReference type="NCBIfam" id="TIGR00878">
    <property type="entry name" value="purM"/>
    <property type="match status" value="1"/>
</dbReference>
<dbReference type="PANTHER" id="PTHR10520:SF12">
    <property type="entry name" value="TRIFUNCTIONAL PURINE BIOSYNTHETIC PROTEIN ADENOSINE-3"/>
    <property type="match status" value="1"/>
</dbReference>
<dbReference type="PANTHER" id="PTHR10520">
    <property type="entry name" value="TRIFUNCTIONAL PURINE BIOSYNTHETIC PROTEIN ADENOSINE-3-RELATED"/>
    <property type="match status" value="1"/>
</dbReference>
<dbReference type="Pfam" id="PF00586">
    <property type="entry name" value="AIRS"/>
    <property type="match status" value="1"/>
</dbReference>
<dbReference type="Pfam" id="PF02769">
    <property type="entry name" value="AIRS_C"/>
    <property type="match status" value="1"/>
</dbReference>
<dbReference type="SUPFAM" id="SSF56042">
    <property type="entry name" value="PurM C-terminal domain-like"/>
    <property type="match status" value="1"/>
</dbReference>
<dbReference type="SUPFAM" id="SSF55326">
    <property type="entry name" value="PurM N-terminal domain-like"/>
    <property type="match status" value="1"/>
</dbReference>
<gene>
    <name evidence="1" type="primary">purM</name>
    <name type="ordered locus">SO_2760</name>
</gene>
<keyword id="KW-0067">ATP-binding</keyword>
<keyword id="KW-0963">Cytoplasm</keyword>
<keyword id="KW-0436">Ligase</keyword>
<keyword id="KW-0547">Nucleotide-binding</keyword>
<keyword id="KW-0658">Purine biosynthesis</keyword>
<keyword id="KW-1185">Reference proteome</keyword>
<protein>
    <recommendedName>
        <fullName evidence="1">Phosphoribosylformylglycinamidine cyclo-ligase</fullName>
        <ecNumber evidence="1">6.3.3.1</ecNumber>
    </recommendedName>
    <alternativeName>
        <fullName evidence="1">AIR synthase</fullName>
    </alternativeName>
    <alternativeName>
        <fullName evidence="1">AIRS</fullName>
    </alternativeName>
    <alternativeName>
        <fullName evidence="1">Phosphoribosyl-aminoimidazole synthetase</fullName>
    </alternativeName>
</protein>
<comment type="catalytic activity">
    <reaction evidence="1">
        <text>2-formamido-N(1)-(5-O-phospho-beta-D-ribosyl)acetamidine + ATP = 5-amino-1-(5-phospho-beta-D-ribosyl)imidazole + ADP + phosphate + H(+)</text>
        <dbReference type="Rhea" id="RHEA:23032"/>
        <dbReference type="ChEBI" id="CHEBI:15378"/>
        <dbReference type="ChEBI" id="CHEBI:30616"/>
        <dbReference type="ChEBI" id="CHEBI:43474"/>
        <dbReference type="ChEBI" id="CHEBI:137981"/>
        <dbReference type="ChEBI" id="CHEBI:147287"/>
        <dbReference type="ChEBI" id="CHEBI:456216"/>
        <dbReference type="EC" id="6.3.3.1"/>
    </reaction>
</comment>
<comment type="pathway">
    <text evidence="1">Purine metabolism; IMP biosynthesis via de novo pathway; 5-amino-1-(5-phospho-D-ribosyl)imidazole from N(2)-formyl-N(1)-(5-phospho-D-ribosyl)glycinamide: step 2/2.</text>
</comment>
<comment type="subcellular location">
    <subcellularLocation>
        <location evidence="1">Cytoplasm</location>
    </subcellularLocation>
</comment>
<comment type="similarity">
    <text evidence="1">Belongs to the AIR synthase family.</text>
</comment>
<proteinExistence type="inferred from homology"/>
<feature type="chain" id="PRO_0000148243" description="Phosphoribosylformylglycinamidine cyclo-ligase">
    <location>
        <begin position="1"/>
        <end position="345"/>
    </location>
</feature>
<accession>Q8EDI8</accession>
<sequence length="345" mass="36761">MSTPTPLSYKDAGVDIDAGNALVNNIKAAVKRTRRPEVMGNLGGFGALCELPTKYKQPVLVSGTDGVGTKLRLAIDYKKHDTVGIDLVAMCVNDLIVQGAEPLFFLDYYATGKLDVETATAVVNGIGEGCFQSGCALIGGETAEMPGMYEGEDYDLAGFCVGVVEKADIIDGSKVAAGDALIALASSGPHSNGYSLVRKVLEVSQADPQQDLNGKPLIQHLLEPTKIYVKSLLKLIEASDVHAMAHITGGGFWENIPRVLPENCKAVIQGDSWQWPAVFSWLMENGNIAEYEMYRTFNCGVGMIVALPADKVDAALALLAAEGEQAWLIGAIAAREGNEEQVEIL</sequence>
<name>PUR5_SHEON</name>
<organism>
    <name type="scientific">Shewanella oneidensis (strain ATCC 700550 / JCM 31522 / CIP 106686 / LMG 19005 / NCIMB 14063 / MR-1)</name>
    <dbReference type="NCBI Taxonomy" id="211586"/>
    <lineage>
        <taxon>Bacteria</taxon>
        <taxon>Pseudomonadati</taxon>
        <taxon>Pseudomonadota</taxon>
        <taxon>Gammaproteobacteria</taxon>
        <taxon>Alteromonadales</taxon>
        <taxon>Shewanellaceae</taxon>
        <taxon>Shewanella</taxon>
    </lineage>
</organism>
<reference key="1">
    <citation type="journal article" date="2002" name="Nat. Biotechnol.">
        <title>Genome sequence of the dissimilatory metal ion-reducing bacterium Shewanella oneidensis.</title>
        <authorList>
            <person name="Heidelberg J.F."/>
            <person name="Paulsen I.T."/>
            <person name="Nelson K.E."/>
            <person name="Gaidos E.J."/>
            <person name="Nelson W.C."/>
            <person name="Read T.D."/>
            <person name="Eisen J.A."/>
            <person name="Seshadri R."/>
            <person name="Ward N.L."/>
            <person name="Methe B.A."/>
            <person name="Clayton R.A."/>
            <person name="Meyer T."/>
            <person name="Tsapin A."/>
            <person name="Scott J."/>
            <person name="Beanan M.J."/>
            <person name="Brinkac L.M."/>
            <person name="Daugherty S.C."/>
            <person name="DeBoy R.T."/>
            <person name="Dodson R.J."/>
            <person name="Durkin A.S."/>
            <person name="Haft D.H."/>
            <person name="Kolonay J.F."/>
            <person name="Madupu R."/>
            <person name="Peterson J.D."/>
            <person name="Umayam L.A."/>
            <person name="White O."/>
            <person name="Wolf A.M."/>
            <person name="Vamathevan J.J."/>
            <person name="Weidman J.F."/>
            <person name="Impraim M."/>
            <person name="Lee K."/>
            <person name="Berry K.J."/>
            <person name="Lee C."/>
            <person name="Mueller J."/>
            <person name="Khouri H.M."/>
            <person name="Gill J."/>
            <person name="Utterback T.R."/>
            <person name="McDonald L.A."/>
            <person name="Feldblyum T.V."/>
            <person name="Smith H.O."/>
            <person name="Venter J.C."/>
            <person name="Nealson K.H."/>
            <person name="Fraser C.M."/>
        </authorList>
    </citation>
    <scope>NUCLEOTIDE SEQUENCE [LARGE SCALE GENOMIC DNA]</scope>
    <source>
        <strain>ATCC 700550 / JCM 31522 / CIP 106686 / LMG 19005 / NCIMB 14063 / MR-1</strain>
    </source>
</reference>
<evidence type="ECO:0000255" key="1">
    <source>
        <dbReference type="HAMAP-Rule" id="MF_00741"/>
    </source>
</evidence>